<comment type="function">
    <text evidence="1">Required for both pre-rRNA processing and heterochromatic gene silencing.</text>
</comment>
<comment type="subunit">
    <text evidence="1">Interacts with crb3, gcr3 and eix1.</text>
</comment>
<comment type="subcellular location">
    <subcellularLocation>
        <location>Nucleus</location>
    </subcellularLocation>
    <subcellularLocation>
        <location>Chromosome</location>
    </subcellularLocation>
    <subcellularLocation>
        <location>Cytoplasm</location>
        <location>Cytoskeleton</location>
        <location>Spindle pole</location>
    </subcellularLocation>
</comment>
<comment type="similarity">
    <text evidence="2">Belongs to the LAS1 family.</text>
</comment>
<organism>
    <name type="scientific">Schizosaccharomyces pombe (strain 972 / ATCC 24843)</name>
    <name type="common">Fission yeast</name>
    <dbReference type="NCBI Taxonomy" id="284812"/>
    <lineage>
        <taxon>Eukaryota</taxon>
        <taxon>Fungi</taxon>
        <taxon>Dikarya</taxon>
        <taxon>Ascomycota</taxon>
        <taxon>Taphrinomycotina</taxon>
        <taxon>Schizosaccharomycetes</taxon>
        <taxon>Schizosaccharomycetales</taxon>
        <taxon>Schizosaccharomycetaceae</taxon>
        <taxon>Schizosaccharomyces</taxon>
    </lineage>
</organism>
<keyword id="KW-0158">Chromosome</keyword>
<keyword id="KW-0963">Cytoplasm</keyword>
<keyword id="KW-0206">Cytoskeleton</keyword>
<keyword id="KW-0539">Nucleus</keyword>
<keyword id="KW-1185">Reference proteome</keyword>
<keyword id="KW-0698">rRNA processing</keyword>
<keyword id="KW-0804">Transcription</keyword>
<keyword id="KW-0805">Transcription regulation</keyword>
<dbReference type="EMBL" id="CU329671">
    <property type="protein sequence ID" value="CAA16919.1"/>
    <property type="molecule type" value="Genomic_DNA"/>
</dbReference>
<dbReference type="PIR" id="T39563">
    <property type="entry name" value="T39563"/>
</dbReference>
<dbReference type="RefSeq" id="NP_596810.1">
    <property type="nucleotide sequence ID" value="NM_001023831.2"/>
</dbReference>
<dbReference type="SMR" id="O42936"/>
<dbReference type="BioGRID" id="276576">
    <property type="interactions" value="3"/>
</dbReference>
<dbReference type="FunCoup" id="O42936">
    <property type="interactions" value="9"/>
</dbReference>
<dbReference type="STRING" id="284812.O42936"/>
<dbReference type="SwissPalm" id="O42936"/>
<dbReference type="PaxDb" id="4896-SPBC16C6.12c.1"/>
<dbReference type="EnsemblFungi" id="SPBC16C6.12c.1">
    <property type="protein sequence ID" value="SPBC16C6.12c.1:pep"/>
    <property type="gene ID" value="SPBC16C6.12c"/>
</dbReference>
<dbReference type="GeneID" id="2540034"/>
<dbReference type="KEGG" id="spo:2540034"/>
<dbReference type="PomBase" id="SPBC16C6.12c">
    <property type="gene designation" value="las1"/>
</dbReference>
<dbReference type="VEuPathDB" id="FungiDB:SPBC16C6.12c"/>
<dbReference type="eggNOG" id="KOG2425">
    <property type="taxonomic scope" value="Eukaryota"/>
</dbReference>
<dbReference type="HOGENOM" id="CLU_581602_0_0_1"/>
<dbReference type="InParanoid" id="O42936"/>
<dbReference type="OMA" id="WRKVNVS"/>
<dbReference type="Reactome" id="R-SPO-6791226">
    <property type="pathway name" value="Major pathway of rRNA processing in the nucleolus and cytosol"/>
</dbReference>
<dbReference type="PRO" id="PR:O42936"/>
<dbReference type="Proteomes" id="UP000002485">
    <property type="component" value="Chromosome II"/>
</dbReference>
<dbReference type="GO" id="GO:0000792">
    <property type="term" value="C:heterochromatin"/>
    <property type="evidence" value="ECO:0000314"/>
    <property type="project" value="PomBase"/>
</dbReference>
<dbReference type="GO" id="GO:0090730">
    <property type="term" value="C:Las1 complex"/>
    <property type="evidence" value="ECO:0000266"/>
    <property type="project" value="PomBase"/>
</dbReference>
<dbReference type="GO" id="GO:0005635">
    <property type="term" value="C:nuclear envelope"/>
    <property type="evidence" value="ECO:0007005"/>
    <property type="project" value="PomBase"/>
</dbReference>
<dbReference type="GO" id="GO:0005634">
    <property type="term" value="C:nucleus"/>
    <property type="evidence" value="ECO:0007005"/>
    <property type="project" value="PomBase"/>
</dbReference>
<dbReference type="GO" id="GO:0120330">
    <property type="term" value="C:rixosome complex"/>
    <property type="evidence" value="ECO:0000304"/>
    <property type="project" value="PomBase"/>
</dbReference>
<dbReference type="GO" id="GO:0000922">
    <property type="term" value="C:spindle pole"/>
    <property type="evidence" value="ECO:0007669"/>
    <property type="project" value="UniProtKB-SubCell"/>
</dbReference>
<dbReference type="GO" id="GO:0004519">
    <property type="term" value="F:endonuclease activity"/>
    <property type="evidence" value="ECO:0007669"/>
    <property type="project" value="InterPro"/>
</dbReference>
<dbReference type="GO" id="GO:0000448">
    <property type="term" value="P:cleavage in ITS2 between 5.8S rRNA and LSU-rRNA of tricistronic rRNA transcript (SSU-rRNA, 5.8S rRNA, LSU-rRNA)"/>
    <property type="evidence" value="ECO:0000305"/>
    <property type="project" value="PomBase"/>
</dbReference>
<dbReference type="GO" id="GO:0000460">
    <property type="term" value="P:maturation of 5.8S rRNA"/>
    <property type="evidence" value="ECO:0000318"/>
    <property type="project" value="GO_Central"/>
</dbReference>
<dbReference type="GO" id="GO:0000470">
    <property type="term" value="P:maturation of LSU-rRNA"/>
    <property type="evidence" value="ECO:0000318"/>
    <property type="project" value="GO_Central"/>
</dbReference>
<dbReference type="GO" id="GO:0006364">
    <property type="term" value="P:rRNA processing"/>
    <property type="evidence" value="ECO:0000315"/>
    <property type="project" value="PomBase"/>
</dbReference>
<dbReference type="InterPro" id="IPR007174">
    <property type="entry name" value="Las1"/>
</dbReference>
<dbReference type="PANTHER" id="PTHR15002">
    <property type="entry name" value="RIBOSOMAL BIOGENESIS PROTEIN LAS1L"/>
    <property type="match status" value="1"/>
</dbReference>
<dbReference type="PANTHER" id="PTHR15002:SF0">
    <property type="entry name" value="RIBOSOMAL BIOGENESIS PROTEIN LAS1L"/>
    <property type="match status" value="1"/>
</dbReference>
<dbReference type="Pfam" id="PF04031">
    <property type="entry name" value="Las1"/>
    <property type="match status" value="1"/>
</dbReference>
<sequence>MDMKVVPWRLKEDFLYLMSCFYNEGQEGIPDLAALFRGVEIIQAWSTRGRIPHSVESTSQLVSSLISNDRSQKLALAVSISRFVSGLLDPIQQSQYAIPMAVLAKSIDLPTYFVELRHAITHEELPSLPVLRQAAQRALSWLYDHYWNPAATAESEDTYDYTETNELHKFEIKRKVKDLLKQWRSWRKVNVSANMFLPVEEHDYIQQFEALVQELVTTANLRLPYIPASFVDDEKDLDFAIETTNLDIVVSCFLEKRVLIPSRTMPISFFPKLKNVWLPLLQSIASKHSFFLPALFTTLWSEILEISQTVDSLVFLDLKEKEELTDKESAGCYLAKWYAYLMREAYTGQPWTSTLSVTQTDLASVLEICLQRSDPFTKIIIDELSILDKELENKFSPLFQYRSDMFDSRILDEQEFEDITLEQMKTELNKFSVRLNNIEAQADSSTMEFQGHVWYKPSVEPSPIGQIIES</sequence>
<name>LAS1_SCHPO</name>
<accession>O42936</accession>
<gene>
    <name type="primary">las1</name>
    <name type="ORF">SPBC16C6.12c</name>
</gene>
<evidence type="ECO:0000269" key="1">
    <source>
    </source>
</evidence>
<evidence type="ECO:0000305" key="2"/>
<reference key="1">
    <citation type="journal article" date="2002" name="Nature">
        <title>The genome sequence of Schizosaccharomyces pombe.</title>
        <authorList>
            <person name="Wood V."/>
            <person name="Gwilliam R."/>
            <person name="Rajandream M.A."/>
            <person name="Lyne M.H."/>
            <person name="Lyne R."/>
            <person name="Stewart A."/>
            <person name="Sgouros J.G."/>
            <person name="Peat N."/>
            <person name="Hayles J."/>
            <person name="Baker S.G."/>
            <person name="Basham D."/>
            <person name="Bowman S."/>
            <person name="Brooks K."/>
            <person name="Brown D."/>
            <person name="Brown S."/>
            <person name="Chillingworth T."/>
            <person name="Churcher C.M."/>
            <person name="Collins M."/>
            <person name="Connor R."/>
            <person name="Cronin A."/>
            <person name="Davis P."/>
            <person name="Feltwell T."/>
            <person name="Fraser A."/>
            <person name="Gentles S."/>
            <person name="Goble A."/>
            <person name="Hamlin N."/>
            <person name="Harris D.E."/>
            <person name="Hidalgo J."/>
            <person name="Hodgson G."/>
            <person name="Holroyd S."/>
            <person name="Hornsby T."/>
            <person name="Howarth S."/>
            <person name="Huckle E.J."/>
            <person name="Hunt S."/>
            <person name="Jagels K."/>
            <person name="James K.D."/>
            <person name="Jones L."/>
            <person name="Jones M."/>
            <person name="Leather S."/>
            <person name="McDonald S."/>
            <person name="McLean J."/>
            <person name="Mooney P."/>
            <person name="Moule S."/>
            <person name="Mungall K.L."/>
            <person name="Murphy L.D."/>
            <person name="Niblett D."/>
            <person name="Odell C."/>
            <person name="Oliver K."/>
            <person name="O'Neil S."/>
            <person name="Pearson D."/>
            <person name="Quail M.A."/>
            <person name="Rabbinowitsch E."/>
            <person name="Rutherford K.M."/>
            <person name="Rutter S."/>
            <person name="Saunders D."/>
            <person name="Seeger K."/>
            <person name="Sharp S."/>
            <person name="Skelton J."/>
            <person name="Simmonds M.N."/>
            <person name="Squares R."/>
            <person name="Squares S."/>
            <person name="Stevens K."/>
            <person name="Taylor K."/>
            <person name="Taylor R.G."/>
            <person name="Tivey A."/>
            <person name="Walsh S.V."/>
            <person name="Warren T."/>
            <person name="Whitehead S."/>
            <person name="Woodward J.R."/>
            <person name="Volckaert G."/>
            <person name="Aert R."/>
            <person name="Robben J."/>
            <person name="Grymonprez B."/>
            <person name="Weltjens I."/>
            <person name="Vanstreels E."/>
            <person name="Rieger M."/>
            <person name="Schaefer M."/>
            <person name="Mueller-Auer S."/>
            <person name="Gabel C."/>
            <person name="Fuchs M."/>
            <person name="Duesterhoeft A."/>
            <person name="Fritzc C."/>
            <person name="Holzer E."/>
            <person name="Moestl D."/>
            <person name="Hilbert H."/>
            <person name="Borzym K."/>
            <person name="Langer I."/>
            <person name="Beck A."/>
            <person name="Lehrach H."/>
            <person name="Reinhardt R."/>
            <person name="Pohl T.M."/>
            <person name="Eger P."/>
            <person name="Zimmermann W."/>
            <person name="Wedler H."/>
            <person name="Wambutt R."/>
            <person name="Purnelle B."/>
            <person name="Goffeau A."/>
            <person name="Cadieu E."/>
            <person name="Dreano S."/>
            <person name="Gloux S."/>
            <person name="Lelaure V."/>
            <person name="Mottier S."/>
            <person name="Galibert F."/>
            <person name="Aves S.J."/>
            <person name="Xiang Z."/>
            <person name="Hunt C."/>
            <person name="Moore K."/>
            <person name="Hurst S.M."/>
            <person name="Lucas M."/>
            <person name="Rochet M."/>
            <person name="Gaillardin C."/>
            <person name="Tallada V.A."/>
            <person name="Garzon A."/>
            <person name="Thode G."/>
            <person name="Daga R.R."/>
            <person name="Cruzado L."/>
            <person name="Jimenez J."/>
            <person name="Sanchez M."/>
            <person name="del Rey F."/>
            <person name="Benito J."/>
            <person name="Dominguez A."/>
            <person name="Revuelta J.L."/>
            <person name="Moreno S."/>
            <person name="Armstrong J."/>
            <person name="Forsburg S.L."/>
            <person name="Cerutti L."/>
            <person name="Lowe T."/>
            <person name="McCombie W.R."/>
            <person name="Paulsen I."/>
            <person name="Potashkin J."/>
            <person name="Shpakovski G.V."/>
            <person name="Ussery D."/>
            <person name="Barrell B.G."/>
            <person name="Nurse P."/>
        </authorList>
    </citation>
    <scope>NUCLEOTIDE SEQUENCE [LARGE SCALE GENOMIC DNA]</scope>
    <source>
        <strain>972 / ATCC 24843</strain>
    </source>
</reference>
<reference key="2">
    <citation type="journal article" date="2006" name="Nat. Biotechnol.">
        <title>ORFeome cloning and global analysis of protein localization in the fission yeast Schizosaccharomyces pombe.</title>
        <authorList>
            <person name="Matsuyama A."/>
            <person name="Arai R."/>
            <person name="Yashiroda Y."/>
            <person name="Shirai A."/>
            <person name="Kamata A."/>
            <person name="Sekido S."/>
            <person name="Kobayashi Y."/>
            <person name="Hashimoto A."/>
            <person name="Hamamoto M."/>
            <person name="Hiraoka Y."/>
            <person name="Horinouchi S."/>
            <person name="Yoshida M."/>
        </authorList>
    </citation>
    <scope>SUBCELLULAR LOCATION [LARGE SCALE ANALYSIS]</scope>
</reference>
<reference key="3">
    <citation type="journal article" date="2011" name="J. Biol. Chem.">
        <title>Roles of fission yeast Grc3 protein in ribosomal RNA processing and heterochromatic gene silencing.</title>
        <authorList>
            <person name="Kitano E."/>
            <person name="Hayashi A."/>
            <person name="Kanai D."/>
            <person name="Shinmyozu K."/>
            <person name="Nakayama J."/>
        </authorList>
    </citation>
    <scope>IDENTIFICATION BY MASS SPECTROMETRY</scope>
    <scope>INTERACTION WITH CRB3</scope>
    <scope>GRC3 AND RIX1</scope>
    <scope>SUBCELLULAR LOCATION</scope>
    <scope>FUNCTION</scope>
</reference>
<proteinExistence type="evidence at protein level"/>
<protein>
    <recommendedName>
        <fullName>Pre-rRNA-processing protein las1</fullName>
    </recommendedName>
</protein>
<feature type="chain" id="PRO_0000211560" description="Pre-rRNA-processing protein las1">
    <location>
        <begin position="1"/>
        <end position="470"/>
    </location>
</feature>